<sequence length="325" mass="37026">MVKRQISMVLDLNKCIGCQTCTSACKLQWTNRNGREYMYWNNVETHPGPGYPRNYEHSGGGFDEEGALKIGITPSAEDYGIPWEYNYEEALMTGTDPWLRPNVKPTWGANWNEDEGRGEYPNSYYFYLPRICNHCANPGCLAACARNAIYKRQEDGIVLVDQERCRGYRYCITACPYKKVYFNEQISKAEKCIFCYPRIEKGLPTACAKQCVGRIRFIGYLDDEAGPVHLLVERYKVAIPLHPEWGTKPSVFYVPPLAPPRIGDDGEPTEETRVPLAYLKELFGEAVVPALETLKTERAKKQSGAESELMDTLIGYRHPEMFKLS</sequence>
<accession>Q8GPG3</accession>
<gene>
    <name type="primary">ddhB</name>
</gene>
<proteinExistence type="evidence at protein level"/>
<reference key="1">
    <citation type="journal article" date="2002" name="Mol. Microbiol.">
        <title>Molecular analysis of dimethyl sulphide dehydrogenase from Rhodovulum sulfidophilum: its place in the dimethyl sulphoxide reductase family of microbial molybdopterin-containing enzymes.</title>
        <authorList>
            <person name="McDevitt C.A."/>
            <person name="Hugenholtz P."/>
            <person name="Hanson G.R."/>
            <person name="McEwan A.G."/>
        </authorList>
    </citation>
    <scope>NUCLEOTIDE SEQUENCE [GENOMIC DNA]</scope>
    <source>
        <strain>SH1</strain>
    </source>
</reference>
<reference key="2">
    <citation type="journal article" date="1996" name="Eur. J. Biochem.">
        <title>Dimethylsulfide:acceptor oxidoreductase from Rhodobacter sulfidophilus. The purified enzyme contains b-type haem and a pterin molybdenum cofactor.</title>
        <authorList>
            <person name="Hanlon S.P."/>
            <person name="Toh T.H."/>
            <person name="Solomon P.S."/>
            <person name="Holt R.A."/>
            <person name="McEwan A.G."/>
        </authorList>
    </citation>
    <scope>FUNCTION</scope>
    <scope>SUBUNIT</scope>
    <scope>COFACTOR</scope>
</reference>
<dbReference type="EMBL" id="AF453479">
    <property type="protein sequence ID" value="AAN46633.1"/>
    <property type="molecule type" value="Genomic_DNA"/>
</dbReference>
<dbReference type="RefSeq" id="WP_060833690.1">
    <property type="nucleotide sequence ID" value="NZ_JAESJE010000038.1"/>
</dbReference>
<dbReference type="SMR" id="Q8GPG3"/>
<dbReference type="STRING" id="35806.A6024_07040"/>
<dbReference type="KEGG" id="ag:AAN46633"/>
<dbReference type="eggNOG" id="COG1140">
    <property type="taxonomic scope" value="Bacteria"/>
</dbReference>
<dbReference type="OrthoDB" id="9779457at2"/>
<dbReference type="BioCyc" id="MetaCyc:MONOMER-14243"/>
<dbReference type="BRENDA" id="1.8.2.4">
    <property type="organism ID" value="5384"/>
</dbReference>
<dbReference type="GO" id="GO:0016020">
    <property type="term" value="C:membrane"/>
    <property type="evidence" value="ECO:0007669"/>
    <property type="project" value="TreeGrafter"/>
</dbReference>
<dbReference type="GO" id="GO:0042597">
    <property type="term" value="C:periplasmic space"/>
    <property type="evidence" value="ECO:0007669"/>
    <property type="project" value="UniProtKB-SubCell"/>
</dbReference>
<dbReference type="GO" id="GO:0051538">
    <property type="term" value="F:3 iron, 4 sulfur cluster binding"/>
    <property type="evidence" value="ECO:0007669"/>
    <property type="project" value="UniProtKB-KW"/>
</dbReference>
<dbReference type="GO" id="GO:0051539">
    <property type="term" value="F:4 iron, 4 sulfur cluster binding"/>
    <property type="evidence" value="ECO:0007669"/>
    <property type="project" value="UniProtKB-KW"/>
</dbReference>
<dbReference type="GO" id="GO:0009055">
    <property type="term" value="F:electron transfer activity"/>
    <property type="evidence" value="ECO:0007669"/>
    <property type="project" value="TreeGrafter"/>
</dbReference>
<dbReference type="GO" id="GO:0046872">
    <property type="term" value="F:metal ion binding"/>
    <property type="evidence" value="ECO:0007669"/>
    <property type="project" value="UniProtKB-KW"/>
</dbReference>
<dbReference type="GO" id="GO:0009061">
    <property type="term" value="P:anaerobic respiration"/>
    <property type="evidence" value="ECO:0007669"/>
    <property type="project" value="InterPro"/>
</dbReference>
<dbReference type="CDD" id="cd10555">
    <property type="entry name" value="EBDH_beta"/>
    <property type="match status" value="1"/>
</dbReference>
<dbReference type="Gene3D" id="3.30.70.20">
    <property type="match status" value="3"/>
</dbReference>
<dbReference type="InterPro" id="IPR017896">
    <property type="entry name" value="4Fe4S_Fe-S-bd"/>
</dbReference>
<dbReference type="InterPro" id="IPR017839">
    <property type="entry name" value="DMSO_Rdtase_II_Fe-S_su"/>
</dbReference>
<dbReference type="NCBIfam" id="TIGR03478">
    <property type="entry name" value="DMSO_red_II_bet"/>
    <property type="match status" value="1"/>
</dbReference>
<dbReference type="PANTHER" id="PTHR43518">
    <property type="entry name" value="NITRATE REDUCTASE BETA SUBUNIT"/>
    <property type="match status" value="1"/>
</dbReference>
<dbReference type="PANTHER" id="PTHR43518:SF1">
    <property type="entry name" value="RESPIRATORY NITRATE REDUCTASE 1 BETA CHAIN"/>
    <property type="match status" value="1"/>
</dbReference>
<dbReference type="Pfam" id="PF13247">
    <property type="entry name" value="Fer4_11"/>
    <property type="match status" value="1"/>
</dbReference>
<dbReference type="SUPFAM" id="SSF54862">
    <property type="entry name" value="4Fe-4S ferredoxins"/>
    <property type="match status" value="1"/>
</dbReference>
<dbReference type="PROSITE" id="PS51379">
    <property type="entry name" value="4FE4S_FER_2"/>
    <property type="match status" value="3"/>
</dbReference>
<name>DDHB_RHOSU</name>
<keyword id="KW-0003">3Fe-4S</keyword>
<keyword id="KW-0004">4Fe-4S</keyword>
<keyword id="KW-0249">Electron transport</keyword>
<keyword id="KW-0408">Iron</keyword>
<keyword id="KW-0411">Iron-sulfur</keyword>
<keyword id="KW-0479">Metal-binding</keyword>
<keyword id="KW-0574">Periplasm</keyword>
<keyword id="KW-0677">Repeat</keyword>
<keyword id="KW-0813">Transport</keyword>
<organism>
    <name type="scientific">Rhodovulum sulfidophilum</name>
    <name type="common">Rhodobacter sulfidophilus</name>
    <dbReference type="NCBI Taxonomy" id="35806"/>
    <lineage>
        <taxon>Bacteria</taxon>
        <taxon>Pseudomonadati</taxon>
        <taxon>Pseudomonadota</taxon>
        <taxon>Alphaproteobacteria</taxon>
        <taxon>Rhodobacterales</taxon>
        <taxon>Paracoccaceae</taxon>
        <taxon>Rhodovulum</taxon>
    </lineage>
</organism>
<protein>
    <recommendedName>
        <fullName>Dimethylsulfide dehydrogenase subunit beta</fullName>
        <shortName>DMS DH subunit beta</shortName>
    </recommendedName>
    <alternativeName>
        <fullName>DMS DH iron-sulfur subunit</fullName>
    </alternativeName>
    <alternativeName>
        <fullName>Dimethyl sulfide:cytochrome c2 reductase subunit beta</fullName>
    </alternativeName>
    <alternativeName>
        <fullName>Dimethylsulfide iron-sulfur subunit</fullName>
    </alternativeName>
</protein>
<evidence type="ECO:0000250" key="1"/>
<evidence type="ECO:0000255" key="2">
    <source>
        <dbReference type="PROSITE-ProRule" id="PRU00711"/>
    </source>
</evidence>
<evidence type="ECO:0000269" key="3">
    <source>
    </source>
</evidence>
<feature type="chain" id="PRO_0000159292" description="Dimethylsulfide dehydrogenase subunit beta">
    <location>
        <begin position="1"/>
        <end position="325"/>
    </location>
</feature>
<feature type="domain" description="4Fe-4S ferredoxin-type 1" evidence="2">
    <location>
        <begin position="6"/>
        <end position="35"/>
    </location>
</feature>
<feature type="domain" description="4Fe-4S ferredoxin-type 2" evidence="2">
    <location>
        <begin position="123"/>
        <end position="154"/>
    </location>
</feature>
<feature type="domain" description="4Fe-4S ferredoxin-type 3" evidence="2">
    <location>
        <begin position="156"/>
        <end position="185"/>
    </location>
</feature>
<feature type="binding site" evidence="1">
    <location>
        <position position="15"/>
    </location>
    <ligand>
        <name>[4Fe-4S] cluster</name>
        <dbReference type="ChEBI" id="CHEBI:49883"/>
        <label>1</label>
    </ligand>
</feature>
<feature type="binding site" evidence="1">
    <location>
        <position position="18"/>
    </location>
    <ligand>
        <name>[4Fe-4S] cluster</name>
        <dbReference type="ChEBI" id="CHEBI:49883"/>
        <label>1</label>
    </ligand>
</feature>
<feature type="binding site" evidence="1">
    <location>
        <position position="21"/>
    </location>
    <ligand>
        <name>[4Fe-4S] cluster</name>
        <dbReference type="ChEBI" id="CHEBI:49883"/>
        <label>1</label>
    </ligand>
</feature>
<feature type="binding site" evidence="1">
    <location>
        <position position="25"/>
    </location>
    <ligand>
        <name>[4Fe-4S] cluster</name>
        <dbReference type="ChEBI" id="CHEBI:49883"/>
        <label>2</label>
    </ligand>
</feature>
<feature type="binding site" evidence="1">
    <location>
        <position position="132"/>
    </location>
    <ligand>
        <name>[4Fe-4S] cluster</name>
        <dbReference type="ChEBI" id="CHEBI:49883"/>
        <label>3</label>
    </ligand>
</feature>
<feature type="binding site" evidence="1">
    <location>
        <position position="135"/>
    </location>
    <ligand>
        <name>[4Fe-4S] cluster</name>
        <dbReference type="ChEBI" id="CHEBI:49883"/>
        <label>3</label>
    </ligand>
</feature>
<feature type="binding site" evidence="1">
    <location>
        <position position="140"/>
    </location>
    <ligand>
        <name>[4Fe-4S] cluster</name>
        <dbReference type="ChEBI" id="CHEBI:49883"/>
        <label>3</label>
    </ligand>
</feature>
<feature type="binding site" evidence="1">
    <location>
        <position position="144"/>
    </location>
    <ligand>
        <name>[3Fe-4S] cluster</name>
        <dbReference type="ChEBI" id="CHEBI:21137"/>
    </ligand>
</feature>
<feature type="binding site" evidence="1">
    <location>
        <position position="165"/>
    </location>
    <ligand>
        <name>[3Fe-4S] cluster</name>
        <dbReference type="ChEBI" id="CHEBI:21137"/>
    </ligand>
</feature>
<feature type="binding site" evidence="1">
    <location>
        <position position="171"/>
    </location>
    <ligand>
        <name>[3Fe-4S] cluster</name>
        <dbReference type="ChEBI" id="CHEBI:21137"/>
    </ligand>
</feature>
<feature type="binding site" evidence="1">
    <location>
        <position position="175"/>
    </location>
    <ligand>
        <name>[4Fe-4S] cluster</name>
        <dbReference type="ChEBI" id="CHEBI:49883"/>
        <label>3</label>
    </ligand>
</feature>
<feature type="binding site" evidence="1">
    <location>
        <position position="192"/>
    </location>
    <ligand>
        <name>[4Fe-4S] cluster</name>
        <dbReference type="ChEBI" id="CHEBI:49883"/>
        <label>2</label>
    </ligand>
</feature>
<feature type="binding site" evidence="1">
    <location>
        <position position="195"/>
    </location>
    <ligand>
        <name>[4Fe-4S] cluster</name>
        <dbReference type="ChEBI" id="CHEBI:49883"/>
        <label>2</label>
    </ligand>
</feature>
<feature type="binding site" evidence="1">
    <location>
        <position position="207"/>
    </location>
    <ligand>
        <name>[4Fe-4S] cluster</name>
        <dbReference type="ChEBI" id="CHEBI:49883"/>
        <label>2</label>
    </ligand>
</feature>
<feature type="binding site" evidence="1">
    <location>
        <position position="211"/>
    </location>
    <ligand>
        <name>[4Fe-4S] cluster</name>
        <dbReference type="ChEBI" id="CHEBI:49883"/>
        <label>1</label>
    </ligand>
</feature>
<comment type="function">
    <text evidence="1 3">Electron transfer subunit of the dehydrogenase during anaerobic growth on dimethyl sulfide.</text>
</comment>
<comment type="cofactor">
    <cofactor evidence="1">
        <name>[3Fe-4S] cluster</name>
        <dbReference type="ChEBI" id="CHEBI:21137"/>
    </cofactor>
    <text evidence="1">Binds 1 [3Fe-4S] cluster.</text>
</comment>
<comment type="cofactor">
    <cofactor evidence="1">
        <name>[4Fe-4S] cluster</name>
        <dbReference type="ChEBI" id="CHEBI:49883"/>
    </cofactor>
    <text evidence="1">Binds 3 [4Fe-4S] clusters.</text>
</comment>
<comment type="subunit">
    <text evidence="3">Heterotrimer of alpha, beta and gamma subunits.</text>
</comment>
<comment type="subcellular location">
    <subcellularLocation>
        <location>Periplasm</location>
    </subcellularLocation>
    <text>Probably translocated together with DdhA, which possesses a Tat-type signal.</text>
</comment>